<comment type="function">
    <text evidence="1">Structural component of flagellum, the bacterial motility apparatus. Part of the rod structure of flagellar basal body (By similarity).</text>
</comment>
<comment type="subunit">
    <text evidence="1">The basal body constitutes a major portion of the flagellar organelle and consists of a number of rings mounted on a central rod. In Gram-negative bacteria, at least four rings, L, P, S and M are present, whereas Gram-positive bacteria lack the L and P rings. The rod consists of about 26 subunits of FlgG in the distal portion, and FlgB, FlgC and FlgF build up the proximal portion of the rod with about 6 subunits each. Rod assembly occurs by export via the flagellum-specific pathway of its constituent proteins and by their incorporation into the rod structure in the probable order of FlgB, FlgC, FlgF and FlgG. Another protein, FliE, also assembles onto the stable rod structure (By similarity).</text>
</comment>
<comment type="subcellular location">
    <subcellularLocation>
        <location evidence="1">Bacterial flagellum basal body</location>
    </subcellularLocation>
</comment>
<comment type="similarity">
    <text evidence="2">Belongs to the flagella basal body rod proteins family.</text>
</comment>
<accession>Q89AI0</accession>
<reference key="1">
    <citation type="journal article" date="2003" name="Proc. Natl. Acad. Sci. U.S.A.">
        <title>Reductive genome evolution in Buchnera aphidicola.</title>
        <authorList>
            <person name="van Ham R.C.H.J."/>
            <person name="Kamerbeek J."/>
            <person name="Palacios C."/>
            <person name="Rausell C."/>
            <person name="Abascal F."/>
            <person name="Bastolla U."/>
            <person name="Fernandez J.M."/>
            <person name="Jimenez L."/>
            <person name="Postigo M."/>
            <person name="Silva F.J."/>
            <person name="Tamames J."/>
            <person name="Viguera E."/>
            <person name="Latorre A."/>
            <person name="Valencia A."/>
            <person name="Moran F."/>
            <person name="Moya A."/>
        </authorList>
    </citation>
    <scope>NUCLEOTIDE SEQUENCE [LARGE SCALE GENOMIC DNA]</scope>
    <source>
        <strain>Bp</strain>
    </source>
</reference>
<keyword id="KW-0975">Bacterial flagellum</keyword>
<keyword id="KW-1185">Reference proteome</keyword>
<proteinExistence type="inferred from homology"/>
<dbReference type="EMBL" id="AE016826">
    <property type="protein sequence ID" value="AAO27032.1"/>
    <property type="molecule type" value="Genomic_DNA"/>
</dbReference>
<dbReference type="RefSeq" id="WP_011091433.1">
    <property type="nucleotide sequence ID" value="NC_004545.1"/>
</dbReference>
<dbReference type="SMR" id="Q89AI0"/>
<dbReference type="STRING" id="224915.bbp_310"/>
<dbReference type="KEGG" id="bab:bbp_310"/>
<dbReference type="eggNOG" id="COG1815">
    <property type="taxonomic scope" value="Bacteria"/>
</dbReference>
<dbReference type="HOGENOM" id="CLU_125463_1_0_6"/>
<dbReference type="OrthoDB" id="9788334at2"/>
<dbReference type="Proteomes" id="UP000000601">
    <property type="component" value="Chromosome"/>
</dbReference>
<dbReference type="GO" id="GO:0030694">
    <property type="term" value="C:bacterial-type flagellum basal body, rod"/>
    <property type="evidence" value="ECO:0007669"/>
    <property type="project" value="InterPro"/>
</dbReference>
<dbReference type="GO" id="GO:0071973">
    <property type="term" value="P:bacterial-type flagellum-dependent cell motility"/>
    <property type="evidence" value="ECO:0007669"/>
    <property type="project" value="InterPro"/>
</dbReference>
<dbReference type="InterPro" id="IPR001444">
    <property type="entry name" value="Flag_bb_rod_N"/>
</dbReference>
<dbReference type="InterPro" id="IPR006300">
    <property type="entry name" value="FlgB"/>
</dbReference>
<dbReference type="NCBIfam" id="TIGR01396">
    <property type="entry name" value="FlgB"/>
    <property type="match status" value="1"/>
</dbReference>
<dbReference type="Pfam" id="PF00460">
    <property type="entry name" value="Flg_bb_rod"/>
    <property type="match status" value="1"/>
</dbReference>
<dbReference type="PIRSF" id="PIRSF002889">
    <property type="entry name" value="Rod_FlgB"/>
    <property type="match status" value="1"/>
</dbReference>
<protein>
    <recommendedName>
        <fullName>Flagellar basal body rod protein FlgB</fullName>
    </recommendedName>
</protein>
<name>FLGB_BUCBP</name>
<feature type="chain" id="PRO_0000180789" description="Flagellar basal body rod protein FlgB">
    <location>
        <begin position="1"/>
        <end position="136"/>
    </location>
</feature>
<sequence>MLDKINNDFNINKILLNLHAYRQEILASNIANANTPGHKSSDINFSKTFGKLFSNALQGKKNNLTTTSNKHISNNDNVELSNYDEQTVKNNSYVSKNNAINIDVDRINFVHNGLKYNADVVFINNKFKNIMNVLKG</sequence>
<evidence type="ECO:0000250" key="1"/>
<evidence type="ECO:0000305" key="2"/>
<organism>
    <name type="scientific">Buchnera aphidicola subsp. Baizongia pistaciae (strain Bp)</name>
    <dbReference type="NCBI Taxonomy" id="224915"/>
    <lineage>
        <taxon>Bacteria</taxon>
        <taxon>Pseudomonadati</taxon>
        <taxon>Pseudomonadota</taxon>
        <taxon>Gammaproteobacteria</taxon>
        <taxon>Enterobacterales</taxon>
        <taxon>Erwiniaceae</taxon>
        <taxon>Buchnera</taxon>
    </lineage>
</organism>
<gene>
    <name type="primary">flgB</name>
    <name type="ordered locus">bbp_310</name>
</gene>